<evidence type="ECO:0000250" key="1"/>
<evidence type="ECO:0000255" key="2">
    <source>
        <dbReference type="HAMAP-Rule" id="MF_00118"/>
    </source>
</evidence>
<evidence type="ECO:0000305" key="3"/>
<name>EFTU_STRPF</name>
<accession>Q1J7N4</accession>
<organism>
    <name type="scientific">Streptococcus pyogenes serotype M4 (strain MGAS10750)</name>
    <dbReference type="NCBI Taxonomy" id="370554"/>
    <lineage>
        <taxon>Bacteria</taxon>
        <taxon>Bacillati</taxon>
        <taxon>Bacillota</taxon>
        <taxon>Bacilli</taxon>
        <taxon>Lactobacillales</taxon>
        <taxon>Streptococcaceae</taxon>
        <taxon>Streptococcus</taxon>
    </lineage>
</organism>
<comment type="function">
    <text evidence="2">GTP hydrolase that promotes the GTP-dependent binding of aminoacyl-tRNA to the A-site of ribosomes during protein biosynthesis.</text>
</comment>
<comment type="catalytic activity">
    <reaction evidence="2">
        <text>GTP + H2O = GDP + phosphate + H(+)</text>
        <dbReference type="Rhea" id="RHEA:19669"/>
        <dbReference type="ChEBI" id="CHEBI:15377"/>
        <dbReference type="ChEBI" id="CHEBI:15378"/>
        <dbReference type="ChEBI" id="CHEBI:37565"/>
        <dbReference type="ChEBI" id="CHEBI:43474"/>
        <dbReference type="ChEBI" id="CHEBI:58189"/>
        <dbReference type="EC" id="3.6.5.3"/>
    </reaction>
    <physiologicalReaction direction="left-to-right" evidence="2">
        <dbReference type="Rhea" id="RHEA:19670"/>
    </physiologicalReaction>
</comment>
<comment type="subunit">
    <text evidence="2">Monomer.</text>
</comment>
<comment type="subcellular location">
    <subcellularLocation>
        <location evidence="2">Cytoplasm</location>
    </subcellularLocation>
</comment>
<comment type="similarity">
    <text evidence="2">Belongs to the TRAFAC class translation factor GTPase superfamily. Classic translation factor GTPase family. EF-Tu/EF-1A subfamily.</text>
</comment>
<comment type="sequence caution" evidence="3">
    <conflict type="erroneous initiation">
        <sequence resource="EMBL-CDS" id="ABF37477"/>
    </conflict>
</comment>
<reference key="1">
    <citation type="journal article" date="2006" name="Proc. Natl. Acad. Sci. U.S.A.">
        <title>Molecular genetic anatomy of inter- and intraserotype variation in the human bacterial pathogen group A Streptococcus.</title>
        <authorList>
            <person name="Beres S.B."/>
            <person name="Richter E.W."/>
            <person name="Nagiec M.J."/>
            <person name="Sumby P."/>
            <person name="Porcella S.F."/>
            <person name="DeLeo F.R."/>
            <person name="Musser J.M."/>
        </authorList>
    </citation>
    <scope>NUCLEOTIDE SEQUENCE [LARGE SCALE GENOMIC DNA]</scope>
    <source>
        <strain>MGAS10750</strain>
    </source>
</reference>
<sequence>MAKEKYDRSKPHVNIGTIGHVDHGKTTLTAAITTVLARRLPSSVNQPKDYASIDAAPEERERGITINTAHVEYETATRHYAHIDAPGHADYVKNMITGAAQMDGAILVVASTDGPMPQTREHILLSRQVGVKHLIVFMNKVDLVDDEELLELVEMEIRDLLSEYDFPGDDLPVIQGSALKALEGDTKFEDIIMELMDTVDSYIPEPERDTDKPLLLPVEDVFSITGRGTVASGRIDRGTVRVNDEIEIVGIKEETKKAVVTGVEMFRKQLDEGLAGDNVGILLRGVQRDEIERGQVIAKPGSINPHTKFKGEVYILSKDEGGRHTPFFNNYRPQFYFRTTDVTGSIELPAGTEMVMPGDNVTINVELIHPIAVEQGTTFSIREGGRTVGSGIVSEIEA</sequence>
<keyword id="KW-0963">Cytoplasm</keyword>
<keyword id="KW-0251">Elongation factor</keyword>
<keyword id="KW-0342">GTP-binding</keyword>
<keyword id="KW-0378">Hydrolase</keyword>
<keyword id="KW-0460">Magnesium</keyword>
<keyword id="KW-0479">Metal-binding</keyword>
<keyword id="KW-0547">Nucleotide-binding</keyword>
<keyword id="KW-0648">Protein biosynthesis</keyword>
<proteinExistence type="inferred from homology"/>
<dbReference type="EC" id="3.6.5.3" evidence="2"/>
<dbReference type="EMBL" id="CP000262">
    <property type="protein sequence ID" value="ABF37477.1"/>
    <property type="status" value="ALT_INIT"/>
    <property type="molecule type" value="Genomic_DNA"/>
</dbReference>
<dbReference type="SMR" id="Q1J7N4"/>
<dbReference type="KEGG" id="spi:MGAS10750_Spy0527"/>
<dbReference type="HOGENOM" id="CLU_007265_0_1_9"/>
<dbReference type="Proteomes" id="UP000002434">
    <property type="component" value="Chromosome"/>
</dbReference>
<dbReference type="GO" id="GO:0005829">
    <property type="term" value="C:cytosol"/>
    <property type="evidence" value="ECO:0007669"/>
    <property type="project" value="TreeGrafter"/>
</dbReference>
<dbReference type="GO" id="GO:0005525">
    <property type="term" value="F:GTP binding"/>
    <property type="evidence" value="ECO:0007669"/>
    <property type="project" value="UniProtKB-UniRule"/>
</dbReference>
<dbReference type="GO" id="GO:0003924">
    <property type="term" value="F:GTPase activity"/>
    <property type="evidence" value="ECO:0007669"/>
    <property type="project" value="InterPro"/>
</dbReference>
<dbReference type="GO" id="GO:0003746">
    <property type="term" value="F:translation elongation factor activity"/>
    <property type="evidence" value="ECO:0007669"/>
    <property type="project" value="UniProtKB-UniRule"/>
</dbReference>
<dbReference type="CDD" id="cd01884">
    <property type="entry name" value="EF_Tu"/>
    <property type="match status" value="1"/>
</dbReference>
<dbReference type="CDD" id="cd03697">
    <property type="entry name" value="EFTU_II"/>
    <property type="match status" value="1"/>
</dbReference>
<dbReference type="CDD" id="cd03707">
    <property type="entry name" value="EFTU_III"/>
    <property type="match status" value="1"/>
</dbReference>
<dbReference type="FunFam" id="2.40.30.10:FF:000001">
    <property type="entry name" value="Elongation factor Tu"/>
    <property type="match status" value="1"/>
</dbReference>
<dbReference type="FunFam" id="3.40.50.300:FF:000003">
    <property type="entry name" value="Elongation factor Tu"/>
    <property type="match status" value="1"/>
</dbReference>
<dbReference type="Gene3D" id="3.40.50.300">
    <property type="entry name" value="P-loop containing nucleotide triphosphate hydrolases"/>
    <property type="match status" value="1"/>
</dbReference>
<dbReference type="Gene3D" id="2.40.30.10">
    <property type="entry name" value="Translation factors"/>
    <property type="match status" value="2"/>
</dbReference>
<dbReference type="HAMAP" id="MF_00118_B">
    <property type="entry name" value="EF_Tu_B"/>
    <property type="match status" value="1"/>
</dbReference>
<dbReference type="InterPro" id="IPR041709">
    <property type="entry name" value="EF-Tu_GTP-bd"/>
</dbReference>
<dbReference type="InterPro" id="IPR050055">
    <property type="entry name" value="EF-Tu_GTPase"/>
</dbReference>
<dbReference type="InterPro" id="IPR004161">
    <property type="entry name" value="EFTu-like_2"/>
</dbReference>
<dbReference type="InterPro" id="IPR033720">
    <property type="entry name" value="EFTU_2"/>
</dbReference>
<dbReference type="InterPro" id="IPR031157">
    <property type="entry name" value="G_TR_CS"/>
</dbReference>
<dbReference type="InterPro" id="IPR027417">
    <property type="entry name" value="P-loop_NTPase"/>
</dbReference>
<dbReference type="InterPro" id="IPR005225">
    <property type="entry name" value="Small_GTP-bd"/>
</dbReference>
<dbReference type="InterPro" id="IPR000795">
    <property type="entry name" value="T_Tr_GTP-bd_dom"/>
</dbReference>
<dbReference type="InterPro" id="IPR009000">
    <property type="entry name" value="Transl_B-barrel_sf"/>
</dbReference>
<dbReference type="InterPro" id="IPR009001">
    <property type="entry name" value="Transl_elong_EF1A/Init_IF2_C"/>
</dbReference>
<dbReference type="InterPro" id="IPR004541">
    <property type="entry name" value="Transl_elong_EFTu/EF1A_bac/org"/>
</dbReference>
<dbReference type="InterPro" id="IPR004160">
    <property type="entry name" value="Transl_elong_EFTu/EF1A_C"/>
</dbReference>
<dbReference type="NCBIfam" id="TIGR00485">
    <property type="entry name" value="EF-Tu"/>
    <property type="match status" value="1"/>
</dbReference>
<dbReference type="NCBIfam" id="NF000766">
    <property type="entry name" value="PRK00049.1"/>
    <property type="match status" value="1"/>
</dbReference>
<dbReference type="NCBIfam" id="NF009372">
    <property type="entry name" value="PRK12735.1"/>
    <property type="match status" value="1"/>
</dbReference>
<dbReference type="NCBIfam" id="NF009373">
    <property type="entry name" value="PRK12736.1"/>
    <property type="match status" value="1"/>
</dbReference>
<dbReference type="NCBIfam" id="TIGR00231">
    <property type="entry name" value="small_GTP"/>
    <property type="match status" value="1"/>
</dbReference>
<dbReference type="PANTHER" id="PTHR43721:SF22">
    <property type="entry name" value="ELONGATION FACTOR TU, MITOCHONDRIAL"/>
    <property type="match status" value="1"/>
</dbReference>
<dbReference type="PANTHER" id="PTHR43721">
    <property type="entry name" value="ELONGATION FACTOR TU-RELATED"/>
    <property type="match status" value="1"/>
</dbReference>
<dbReference type="Pfam" id="PF00009">
    <property type="entry name" value="GTP_EFTU"/>
    <property type="match status" value="1"/>
</dbReference>
<dbReference type="Pfam" id="PF03144">
    <property type="entry name" value="GTP_EFTU_D2"/>
    <property type="match status" value="1"/>
</dbReference>
<dbReference type="Pfam" id="PF03143">
    <property type="entry name" value="GTP_EFTU_D3"/>
    <property type="match status" value="1"/>
</dbReference>
<dbReference type="PRINTS" id="PR00315">
    <property type="entry name" value="ELONGATNFCT"/>
</dbReference>
<dbReference type="SUPFAM" id="SSF50465">
    <property type="entry name" value="EF-Tu/eEF-1alpha/eIF2-gamma C-terminal domain"/>
    <property type="match status" value="1"/>
</dbReference>
<dbReference type="SUPFAM" id="SSF52540">
    <property type="entry name" value="P-loop containing nucleoside triphosphate hydrolases"/>
    <property type="match status" value="1"/>
</dbReference>
<dbReference type="SUPFAM" id="SSF50447">
    <property type="entry name" value="Translation proteins"/>
    <property type="match status" value="1"/>
</dbReference>
<dbReference type="PROSITE" id="PS00301">
    <property type="entry name" value="G_TR_1"/>
    <property type="match status" value="1"/>
</dbReference>
<dbReference type="PROSITE" id="PS51722">
    <property type="entry name" value="G_TR_2"/>
    <property type="match status" value="1"/>
</dbReference>
<protein>
    <recommendedName>
        <fullName evidence="2">Elongation factor Tu</fullName>
        <shortName evidence="2">EF-Tu</shortName>
        <ecNumber evidence="2">3.6.5.3</ecNumber>
    </recommendedName>
</protein>
<feature type="chain" id="PRO_0000337554" description="Elongation factor Tu">
    <location>
        <begin position="1"/>
        <end position="398"/>
    </location>
</feature>
<feature type="domain" description="tr-type G">
    <location>
        <begin position="10"/>
        <end position="207"/>
    </location>
</feature>
<feature type="region of interest" description="G1" evidence="1">
    <location>
        <begin position="19"/>
        <end position="26"/>
    </location>
</feature>
<feature type="region of interest" description="G2" evidence="1">
    <location>
        <begin position="63"/>
        <end position="67"/>
    </location>
</feature>
<feature type="region of interest" description="G3" evidence="1">
    <location>
        <begin position="84"/>
        <end position="87"/>
    </location>
</feature>
<feature type="region of interest" description="G4" evidence="1">
    <location>
        <begin position="139"/>
        <end position="142"/>
    </location>
</feature>
<feature type="region of interest" description="G5" evidence="1">
    <location>
        <begin position="177"/>
        <end position="179"/>
    </location>
</feature>
<feature type="binding site" evidence="2">
    <location>
        <begin position="19"/>
        <end position="26"/>
    </location>
    <ligand>
        <name>GTP</name>
        <dbReference type="ChEBI" id="CHEBI:37565"/>
    </ligand>
</feature>
<feature type="binding site" evidence="2">
    <location>
        <position position="26"/>
    </location>
    <ligand>
        <name>Mg(2+)</name>
        <dbReference type="ChEBI" id="CHEBI:18420"/>
    </ligand>
</feature>
<feature type="binding site" evidence="2">
    <location>
        <begin position="84"/>
        <end position="88"/>
    </location>
    <ligand>
        <name>GTP</name>
        <dbReference type="ChEBI" id="CHEBI:37565"/>
    </ligand>
</feature>
<feature type="binding site" evidence="2">
    <location>
        <begin position="139"/>
        <end position="142"/>
    </location>
    <ligand>
        <name>GTP</name>
        <dbReference type="ChEBI" id="CHEBI:37565"/>
    </ligand>
</feature>
<gene>
    <name evidence="2" type="primary">tuf</name>
    <name type="ordered locus">MGAS10750_Spy0527</name>
</gene>